<sequence>MKTFVAKPETVKRDWYVVDATGKTLGRLATELARRLRGKHKAEYTPHVDTGDYIIVINADKVAVTGRKETDKLYYWHTGYVGGIKQATFKEMIARRPEAVIEIAVKGMLPKGPLGRAMFRKLKVYAGAEHQHAAQQPQVLDI</sequence>
<name>RL13_HAEIE</name>
<reference key="1">
    <citation type="journal article" date="2007" name="Genome Biol.">
        <title>Characterization and modeling of the Haemophilus influenzae core and supragenomes based on the complete genomic sequences of Rd and 12 clinical nontypeable strains.</title>
        <authorList>
            <person name="Hogg J.S."/>
            <person name="Hu F.Z."/>
            <person name="Janto B."/>
            <person name="Boissy R."/>
            <person name="Hayes J."/>
            <person name="Keefe R."/>
            <person name="Post J.C."/>
            <person name="Ehrlich G.D."/>
        </authorList>
    </citation>
    <scope>NUCLEOTIDE SEQUENCE [LARGE SCALE GENOMIC DNA]</scope>
    <source>
        <strain>PittEE</strain>
    </source>
</reference>
<dbReference type="EMBL" id="CP000671">
    <property type="protein sequence ID" value="ABQ98356.1"/>
    <property type="molecule type" value="Genomic_DNA"/>
</dbReference>
<dbReference type="SMR" id="A5UC55"/>
<dbReference type="KEGG" id="hip:CGSHiEE_04815"/>
<dbReference type="HOGENOM" id="CLU_082184_2_2_6"/>
<dbReference type="GO" id="GO:0022625">
    <property type="term" value="C:cytosolic large ribosomal subunit"/>
    <property type="evidence" value="ECO:0007669"/>
    <property type="project" value="TreeGrafter"/>
</dbReference>
<dbReference type="GO" id="GO:0003729">
    <property type="term" value="F:mRNA binding"/>
    <property type="evidence" value="ECO:0007669"/>
    <property type="project" value="TreeGrafter"/>
</dbReference>
<dbReference type="GO" id="GO:0003735">
    <property type="term" value="F:structural constituent of ribosome"/>
    <property type="evidence" value="ECO:0007669"/>
    <property type="project" value="InterPro"/>
</dbReference>
<dbReference type="GO" id="GO:0017148">
    <property type="term" value="P:negative regulation of translation"/>
    <property type="evidence" value="ECO:0007669"/>
    <property type="project" value="TreeGrafter"/>
</dbReference>
<dbReference type="GO" id="GO:0006412">
    <property type="term" value="P:translation"/>
    <property type="evidence" value="ECO:0007669"/>
    <property type="project" value="UniProtKB-UniRule"/>
</dbReference>
<dbReference type="CDD" id="cd00392">
    <property type="entry name" value="Ribosomal_L13"/>
    <property type="match status" value="1"/>
</dbReference>
<dbReference type="FunFam" id="3.90.1180.10:FF:000001">
    <property type="entry name" value="50S ribosomal protein L13"/>
    <property type="match status" value="1"/>
</dbReference>
<dbReference type="Gene3D" id="3.90.1180.10">
    <property type="entry name" value="Ribosomal protein L13"/>
    <property type="match status" value="1"/>
</dbReference>
<dbReference type="HAMAP" id="MF_01366">
    <property type="entry name" value="Ribosomal_uL13"/>
    <property type="match status" value="1"/>
</dbReference>
<dbReference type="InterPro" id="IPR005822">
    <property type="entry name" value="Ribosomal_uL13"/>
</dbReference>
<dbReference type="InterPro" id="IPR005823">
    <property type="entry name" value="Ribosomal_uL13_bac-type"/>
</dbReference>
<dbReference type="InterPro" id="IPR023563">
    <property type="entry name" value="Ribosomal_uL13_CS"/>
</dbReference>
<dbReference type="InterPro" id="IPR036899">
    <property type="entry name" value="Ribosomal_uL13_sf"/>
</dbReference>
<dbReference type="NCBIfam" id="TIGR01066">
    <property type="entry name" value="rplM_bact"/>
    <property type="match status" value="1"/>
</dbReference>
<dbReference type="PANTHER" id="PTHR11545:SF2">
    <property type="entry name" value="LARGE RIBOSOMAL SUBUNIT PROTEIN UL13M"/>
    <property type="match status" value="1"/>
</dbReference>
<dbReference type="PANTHER" id="PTHR11545">
    <property type="entry name" value="RIBOSOMAL PROTEIN L13"/>
    <property type="match status" value="1"/>
</dbReference>
<dbReference type="Pfam" id="PF00572">
    <property type="entry name" value="Ribosomal_L13"/>
    <property type="match status" value="1"/>
</dbReference>
<dbReference type="PIRSF" id="PIRSF002181">
    <property type="entry name" value="Ribosomal_L13"/>
    <property type="match status" value="1"/>
</dbReference>
<dbReference type="SUPFAM" id="SSF52161">
    <property type="entry name" value="Ribosomal protein L13"/>
    <property type="match status" value="1"/>
</dbReference>
<dbReference type="PROSITE" id="PS00783">
    <property type="entry name" value="RIBOSOMAL_L13"/>
    <property type="match status" value="1"/>
</dbReference>
<keyword id="KW-0687">Ribonucleoprotein</keyword>
<keyword id="KW-0689">Ribosomal protein</keyword>
<comment type="function">
    <text evidence="1">This protein is one of the early assembly proteins of the 50S ribosomal subunit, although it is not seen to bind rRNA by itself. It is important during the early stages of 50S assembly.</text>
</comment>
<comment type="subunit">
    <text evidence="1">Part of the 50S ribosomal subunit.</text>
</comment>
<comment type="similarity">
    <text evidence="1">Belongs to the universal ribosomal protein uL13 family.</text>
</comment>
<accession>A5UC55</accession>
<gene>
    <name evidence="1" type="primary">rplM</name>
    <name type="ordered locus">CGSHiEE_04815</name>
</gene>
<protein>
    <recommendedName>
        <fullName evidence="1">Large ribosomal subunit protein uL13</fullName>
    </recommendedName>
    <alternativeName>
        <fullName evidence="2">50S ribosomal protein L13</fullName>
    </alternativeName>
</protein>
<feature type="chain" id="PRO_1000055387" description="Large ribosomal subunit protein uL13">
    <location>
        <begin position="1"/>
        <end position="142"/>
    </location>
</feature>
<evidence type="ECO:0000255" key="1">
    <source>
        <dbReference type="HAMAP-Rule" id="MF_01366"/>
    </source>
</evidence>
<evidence type="ECO:0000305" key="2"/>
<proteinExistence type="inferred from homology"/>
<organism>
    <name type="scientific">Haemophilus influenzae (strain PittEE)</name>
    <dbReference type="NCBI Taxonomy" id="374930"/>
    <lineage>
        <taxon>Bacteria</taxon>
        <taxon>Pseudomonadati</taxon>
        <taxon>Pseudomonadota</taxon>
        <taxon>Gammaproteobacteria</taxon>
        <taxon>Pasteurellales</taxon>
        <taxon>Pasteurellaceae</taxon>
        <taxon>Haemophilus</taxon>
    </lineage>
</organism>